<name>YQGF_BURM7</name>
<dbReference type="EC" id="3.1.-.-" evidence="1"/>
<dbReference type="EMBL" id="CP000548">
    <property type="protein sequence ID" value="ABO06235.1"/>
    <property type="molecule type" value="Genomic_DNA"/>
</dbReference>
<dbReference type="SMR" id="A3MMA9"/>
<dbReference type="KEGG" id="bmaz:BM44_1344"/>
<dbReference type="KEGG" id="bmn:BMA10247_1858"/>
<dbReference type="PATRIC" id="fig|320389.8.peg.1505"/>
<dbReference type="GO" id="GO:0005829">
    <property type="term" value="C:cytosol"/>
    <property type="evidence" value="ECO:0007669"/>
    <property type="project" value="TreeGrafter"/>
</dbReference>
<dbReference type="GO" id="GO:0004518">
    <property type="term" value="F:nuclease activity"/>
    <property type="evidence" value="ECO:0007669"/>
    <property type="project" value="UniProtKB-KW"/>
</dbReference>
<dbReference type="GO" id="GO:0000967">
    <property type="term" value="P:rRNA 5'-end processing"/>
    <property type="evidence" value="ECO:0007669"/>
    <property type="project" value="UniProtKB-UniRule"/>
</dbReference>
<dbReference type="CDD" id="cd16964">
    <property type="entry name" value="YqgF"/>
    <property type="match status" value="1"/>
</dbReference>
<dbReference type="Gene3D" id="3.30.420.140">
    <property type="entry name" value="YqgF/RNase H-like domain"/>
    <property type="match status" value="1"/>
</dbReference>
<dbReference type="HAMAP" id="MF_00651">
    <property type="entry name" value="Nuclease_YqgF"/>
    <property type="match status" value="1"/>
</dbReference>
<dbReference type="InterPro" id="IPR012337">
    <property type="entry name" value="RNaseH-like_sf"/>
</dbReference>
<dbReference type="InterPro" id="IPR005227">
    <property type="entry name" value="YqgF"/>
</dbReference>
<dbReference type="InterPro" id="IPR006641">
    <property type="entry name" value="YqgF/RNaseH-like_dom"/>
</dbReference>
<dbReference type="InterPro" id="IPR037027">
    <property type="entry name" value="YqgF/RNaseH-like_dom_sf"/>
</dbReference>
<dbReference type="NCBIfam" id="TIGR00250">
    <property type="entry name" value="RNAse_H_YqgF"/>
    <property type="match status" value="1"/>
</dbReference>
<dbReference type="PANTHER" id="PTHR33317">
    <property type="entry name" value="POLYNUCLEOTIDYL TRANSFERASE, RIBONUCLEASE H-LIKE SUPERFAMILY PROTEIN"/>
    <property type="match status" value="1"/>
</dbReference>
<dbReference type="PANTHER" id="PTHR33317:SF4">
    <property type="entry name" value="POLYNUCLEOTIDYL TRANSFERASE, RIBONUCLEASE H-LIKE SUPERFAMILY PROTEIN"/>
    <property type="match status" value="1"/>
</dbReference>
<dbReference type="Pfam" id="PF03652">
    <property type="entry name" value="RuvX"/>
    <property type="match status" value="1"/>
</dbReference>
<dbReference type="SMART" id="SM00732">
    <property type="entry name" value="YqgFc"/>
    <property type="match status" value="1"/>
</dbReference>
<dbReference type="SUPFAM" id="SSF53098">
    <property type="entry name" value="Ribonuclease H-like"/>
    <property type="match status" value="1"/>
</dbReference>
<accession>A3MMA9</accession>
<keyword id="KW-0963">Cytoplasm</keyword>
<keyword id="KW-0378">Hydrolase</keyword>
<keyword id="KW-0540">Nuclease</keyword>
<keyword id="KW-0690">Ribosome biogenesis</keyword>
<reference key="1">
    <citation type="journal article" date="2010" name="Genome Biol. Evol.">
        <title>Continuing evolution of Burkholderia mallei through genome reduction and large-scale rearrangements.</title>
        <authorList>
            <person name="Losada L."/>
            <person name="Ronning C.M."/>
            <person name="DeShazer D."/>
            <person name="Woods D."/>
            <person name="Fedorova N."/>
            <person name="Kim H.S."/>
            <person name="Shabalina S.A."/>
            <person name="Pearson T.R."/>
            <person name="Brinkac L."/>
            <person name="Tan P."/>
            <person name="Nandi T."/>
            <person name="Crabtree J."/>
            <person name="Badger J."/>
            <person name="Beckstrom-Sternberg S."/>
            <person name="Saqib M."/>
            <person name="Schutzer S.E."/>
            <person name="Keim P."/>
            <person name="Nierman W.C."/>
        </authorList>
    </citation>
    <scope>NUCLEOTIDE SEQUENCE [LARGE SCALE GENOMIC DNA]</scope>
    <source>
        <strain>NCTC 10247</strain>
    </source>
</reference>
<evidence type="ECO:0000255" key="1">
    <source>
        <dbReference type="HAMAP-Rule" id="MF_00651"/>
    </source>
</evidence>
<comment type="function">
    <text evidence="1">Could be a nuclease involved in processing of the 5'-end of pre-16S rRNA.</text>
</comment>
<comment type="subcellular location">
    <subcellularLocation>
        <location evidence="1">Cytoplasm</location>
    </subcellularLocation>
</comment>
<comment type="similarity">
    <text evidence="1">Belongs to the YqgF nuclease family.</text>
</comment>
<organism>
    <name type="scientific">Burkholderia mallei (strain NCTC 10247)</name>
    <dbReference type="NCBI Taxonomy" id="320389"/>
    <lineage>
        <taxon>Bacteria</taxon>
        <taxon>Pseudomonadati</taxon>
        <taxon>Pseudomonadota</taxon>
        <taxon>Betaproteobacteria</taxon>
        <taxon>Burkholderiales</taxon>
        <taxon>Burkholderiaceae</taxon>
        <taxon>Burkholderia</taxon>
        <taxon>pseudomallei group</taxon>
    </lineage>
</organism>
<feature type="chain" id="PRO_1000061493" description="Putative pre-16S rRNA nuclease">
    <location>
        <begin position="1"/>
        <end position="146"/>
    </location>
</feature>
<sequence length="146" mass="16240">MSAALSRDATLLAFDYGEKRIGVAVGNLLTRTARALVIVRNLNREHRFKAVGELIAEWKPDALVVGLPLHPDGAPHEMTQRAMRFGNQLNGRFNLPVSWVDERYSSVEARAGLRARGDAADRVDAEAARVILQQYLDGLPDHHEFN</sequence>
<proteinExistence type="inferred from homology"/>
<gene>
    <name type="ordered locus">BMA10247_1858</name>
</gene>
<protein>
    <recommendedName>
        <fullName evidence="1">Putative pre-16S rRNA nuclease</fullName>
        <ecNumber evidence="1">3.1.-.-</ecNumber>
    </recommendedName>
</protein>